<keyword id="KW-0965">Cell junction</keyword>
<keyword id="KW-0963">Cytoplasm</keyword>
<keyword id="KW-1185">Reference proteome</keyword>
<protein>
    <recommendedName>
        <fullName>Focadhesin</fullName>
    </recommendedName>
</protein>
<proteinExistence type="inferred from homology"/>
<sequence length="1806" mass="199067">MTETLKARLEFPNSLIQAQAVRTLVAAVLKEKGQNEKICQTSTKGPALESLWEQCSSDSTVVRSACCNALVLLVEQGHADLPYVLNTTLNLLPSARNVQGLIKVVGRLLQIQAGQRENRASFTCPYSIRSFPHPYITVLENRPDCWPALLQEIDDFLQLATDKDEPVFVEMLVPFLRYLYCEPQRLSENALLRQSLLRVLLQPREAPESDRLEEKGASSTRVVRELIRSLFDLLPHMLVDSVTAVVELSSFAESLTAALISHPELWRKELTRLALQLLCACQLTIHLGGELMSLLHTLHHIIPAHAEELPAEQVIMGISLLLLNASVSQQTALLDLAVKIVPPELPPPWGASLLVMPLLHVLSCSSLMEALTDTQTHTKNQKLANSLLQTVQREPARRKEDSMQLDLPLSTWYSELQVAVSVLHRVSTDSTSSSEWLYSLQSSLSVCENVPDTVCLLVSHLIFRSDGDLCRLALETAAAIAEADPAKVPCLLPVLMFKLSRVSDPALSLSVLYTLPKLGTHKLCIPQVLHVLQTVGSSSRLRPVALRLLALLWKKQDRVYPDLQRLMCQLDKSSVVMGKDTQWEQILARAACVRDICRERPYQHGGDMLAAIRDTLLQFSRKDQATPVALALQALQELCRAEVVDICSTWKALSPKLLSDTRPLVLKATAELLALVPDLNVKTEEYEKFGSEAVGVLWGYALSQDSVVASQGFKALSEYPESSHTILHLPEQARPIPKQPEVEDEVKQNEEENEEEEDISVPGASYVKLVSLTSLSVLPALETFLTALVRQEMKQMPRGVYHSALTGGNLRSDQGKTVSGIPSFMLKMYEKNKQPGLKPGLAAGLLLCYDLPVQTDKDGRPIIRFLVSRGRSYQQMLATFIHEVNIQPSEWHRSLLLPQAWRGFMSRAFHALLQGRKAELEMLQKQGKESPEELQYQQHYAWLWVRDRLTDVVKSAAKDSPVVQGNSILALSGLAVVLTRYESNLPAQSESGPEAGPDIFPTVHWLSMVIDTLLSIVSSNSNPKAQVFPWFVHRSYSGENTASVIARSCAALGLALLVPVLVTWRRDSIPSILGTLEAGLPGSATADESQALQFHSGLALGMFLAWLLDERVSDISGQSVAELLMKHLKRLEVCCFDPNLEYNAGCVLGVGLVLSSLSSSSQCERDRVHVSHTLDRLLQSLQDSSNNSRMMQEVVAYSVACVGVSAFSAGIIEASKAEESMNTLRALTEESQQTPGFALALGQTVFGLSSFGHGKAVDIQPRLLAAWTKILLAEGCPTMQRLSALNGLIALVGSETALIQMKSECEETSLQHSRLNEVIRAITQIITFSGTIGLQSNGACLLGHLHLTHASSRHSRTAVPQDFGYLSESSVIRASVDFITEAGRKGPEFTAPQRVKTLLSALAAVGADFQYPPVNWSSVLSPLMRLGFGEEVQHYCLELAASQTQSSQSASLFLGVWLVPPLVHSLSLRTRAHLYESLSCWMKHVAEDKLQVYVDSLAVQQFEPLTRLQRLSLCLSILHGLSRAMTAPNPPQNCWSVLCSTAEKIYNLLPDSIPAAEVALYEAMCSCLSEMSDAEIDRIVKVSEANVEKTAFILSYLVSKGRVPLLGLNDVISTILQVGSKRPISWLLLQGLHQSRFASGPNTGVSKRMEWLLELMGHIRNVAYGSPSVKCVDVLQGTDFLLGVFAAAVVSWADHGGPLLVGIRARWFPWPQSAELCHGLYANPEDTELPVASCLLAIPYSIRKLLDKEPWKSQSQKFIDWLFSITEAPKQAFSETAVLTAKAALMALRSSSEFKKKTVWTRAYGW</sequence>
<name>FOCAD_DANRE</name>
<gene>
    <name type="primary">focad</name>
</gene>
<comment type="function">
    <text evidence="1">Required for the maintenance of SKIC2 and SKIC3 proteostatic levels in the liver. May be involved in the regulation of RNA degradation by the exosome complex.</text>
</comment>
<comment type="subcellular location">
    <subcellularLocation>
        <location evidence="1">Cell junction</location>
        <location evidence="1">Focal adhesion</location>
    </subcellularLocation>
    <subcellularLocation>
        <location evidence="1">Cytoplasm</location>
        <location evidence="1">Cytosol</location>
    </subcellularLocation>
    <text evidence="1">In astrocytes, localizes to the end of actin stress fibers, which normally terminate at focal adhesions. In hepatocytes, it is found in the cytosol.</text>
</comment>
<comment type="disruption phenotype">
    <text evidence="3">Gene knockdown results in decreased overall survival and growth retardation. Mutant fishes have pathological liver features, including swollen hepatocytes, steatosis, fibrosis, and hepatocyte apoptosis.</text>
</comment>
<accession>E7FGT5</accession>
<reference key="1">
    <citation type="journal article" date="2013" name="Nature">
        <title>The zebrafish reference genome sequence and its relationship to the human genome.</title>
        <authorList>
            <person name="Howe K."/>
            <person name="Clark M.D."/>
            <person name="Torroja C.F."/>
            <person name="Torrance J."/>
            <person name="Berthelot C."/>
            <person name="Muffato M."/>
            <person name="Collins J.E."/>
            <person name="Humphray S."/>
            <person name="McLaren K."/>
            <person name="Matthews L."/>
            <person name="McLaren S."/>
            <person name="Sealy I."/>
            <person name="Caccamo M."/>
            <person name="Churcher C."/>
            <person name="Scott C."/>
            <person name="Barrett J.C."/>
            <person name="Koch R."/>
            <person name="Rauch G.J."/>
            <person name="White S."/>
            <person name="Chow W."/>
            <person name="Kilian B."/>
            <person name="Quintais L.T."/>
            <person name="Guerra-Assuncao J.A."/>
            <person name="Zhou Y."/>
            <person name="Gu Y."/>
            <person name="Yen J."/>
            <person name="Vogel J.H."/>
            <person name="Eyre T."/>
            <person name="Redmond S."/>
            <person name="Banerjee R."/>
            <person name="Chi J."/>
            <person name="Fu B."/>
            <person name="Langley E."/>
            <person name="Maguire S.F."/>
            <person name="Laird G.K."/>
            <person name="Lloyd D."/>
            <person name="Kenyon E."/>
            <person name="Donaldson S."/>
            <person name="Sehra H."/>
            <person name="Almeida-King J."/>
            <person name="Loveland J."/>
            <person name="Trevanion S."/>
            <person name="Jones M."/>
            <person name="Quail M."/>
            <person name="Willey D."/>
            <person name="Hunt A."/>
            <person name="Burton J."/>
            <person name="Sims S."/>
            <person name="McLay K."/>
            <person name="Plumb B."/>
            <person name="Davis J."/>
            <person name="Clee C."/>
            <person name="Oliver K."/>
            <person name="Clark R."/>
            <person name="Riddle C."/>
            <person name="Elliot D."/>
            <person name="Threadgold G."/>
            <person name="Harden G."/>
            <person name="Ware D."/>
            <person name="Begum S."/>
            <person name="Mortimore B."/>
            <person name="Kerry G."/>
            <person name="Heath P."/>
            <person name="Phillimore B."/>
            <person name="Tracey A."/>
            <person name="Corby N."/>
            <person name="Dunn M."/>
            <person name="Johnson C."/>
            <person name="Wood J."/>
            <person name="Clark S."/>
            <person name="Pelan S."/>
            <person name="Griffiths G."/>
            <person name="Smith M."/>
            <person name="Glithero R."/>
            <person name="Howden P."/>
            <person name="Barker N."/>
            <person name="Lloyd C."/>
            <person name="Stevens C."/>
            <person name="Harley J."/>
            <person name="Holt K."/>
            <person name="Panagiotidis G."/>
            <person name="Lovell J."/>
            <person name="Beasley H."/>
            <person name="Henderson C."/>
            <person name="Gordon D."/>
            <person name="Auger K."/>
            <person name="Wright D."/>
            <person name="Collins J."/>
            <person name="Raisen C."/>
            <person name="Dyer L."/>
            <person name="Leung K."/>
            <person name="Robertson L."/>
            <person name="Ambridge K."/>
            <person name="Leongamornlert D."/>
            <person name="McGuire S."/>
            <person name="Gilderthorp R."/>
            <person name="Griffiths C."/>
            <person name="Manthravadi D."/>
            <person name="Nichol S."/>
            <person name="Barker G."/>
            <person name="Whitehead S."/>
            <person name="Kay M."/>
            <person name="Brown J."/>
            <person name="Murnane C."/>
            <person name="Gray E."/>
            <person name="Humphries M."/>
            <person name="Sycamore N."/>
            <person name="Barker D."/>
            <person name="Saunders D."/>
            <person name="Wallis J."/>
            <person name="Babbage A."/>
            <person name="Hammond S."/>
            <person name="Mashreghi-Mohammadi M."/>
            <person name="Barr L."/>
            <person name="Martin S."/>
            <person name="Wray P."/>
            <person name="Ellington A."/>
            <person name="Matthews N."/>
            <person name="Ellwood M."/>
            <person name="Woodmansey R."/>
            <person name="Clark G."/>
            <person name="Cooper J."/>
            <person name="Tromans A."/>
            <person name="Grafham D."/>
            <person name="Skuce C."/>
            <person name="Pandian R."/>
            <person name="Andrews R."/>
            <person name="Harrison E."/>
            <person name="Kimberley A."/>
            <person name="Garnett J."/>
            <person name="Fosker N."/>
            <person name="Hall R."/>
            <person name="Garner P."/>
            <person name="Kelly D."/>
            <person name="Bird C."/>
            <person name="Palmer S."/>
            <person name="Gehring I."/>
            <person name="Berger A."/>
            <person name="Dooley C.M."/>
            <person name="Ersan-Urun Z."/>
            <person name="Eser C."/>
            <person name="Geiger H."/>
            <person name="Geisler M."/>
            <person name="Karotki L."/>
            <person name="Kirn A."/>
            <person name="Konantz J."/>
            <person name="Konantz M."/>
            <person name="Oberlander M."/>
            <person name="Rudolph-Geiger S."/>
            <person name="Teucke M."/>
            <person name="Lanz C."/>
            <person name="Raddatz G."/>
            <person name="Osoegawa K."/>
            <person name="Zhu B."/>
            <person name="Rapp A."/>
            <person name="Widaa S."/>
            <person name="Langford C."/>
            <person name="Yang F."/>
            <person name="Schuster S.C."/>
            <person name="Carter N.P."/>
            <person name="Harrow J."/>
            <person name="Ning Z."/>
            <person name="Herrero J."/>
            <person name="Searle S.M."/>
            <person name="Enright A."/>
            <person name="Geisler R."/>
            <person name="Plasterk R.H."/>
            <person name="Lee C."/>
            <person name="Westerfield M."/>
            <person name="de Jong P.J."/>
            <person name="Zon L.I."/>
            <person name="Postlethwait J.H."/>
            <person name="Nusslein-Volhard C."/>
            <person name="Hubbard T.J."/>
            <person name="Roest Crollius H."/>
            <person name="Rogers J."/>
            <person name="Stemple D.L."/>
        </authorList>
    </citation>
    <scope>NUCLEOTIDE SEQUENCE [LARGE SCALE GENOMIC DNA]</scope>
    <source>
        <strain>Tuebingen</strain>
    </source>
</reference>
<reference key="2">
    <citation type="journal article" date="2022" name="Nat. Genet.">
        <title>Loss of FOCAD, operating via the SKI messenger RNA surveillance pathway, causes a pediatric syndrome with liver cirrhosis.</title>
        <authorList>
            <person name="Moreno Traspas R."/>
            <person name="Teoh T.S."/>
            <person name="Wong P.M."/>
            <person name="Maier M."/>
            <person name="Chia C.Y."/>
            <person name="Lay K."/>
            <person name="Ali N.A."/>
            <person name="Larson A."/>
            <person name="Al Mutairi F."/>
            <person name="Al-Sannaa N.A."/>
            <person name="Faqeih E.A."/>
            <person name="Alfadhel M."/>
            <person name="Cheema H.A."/>
            <person name="Dupont J."/>
            <person name="Bezieau S."/>
            <person name="Isidor B."/>
            <person name="Low D.Y."/>
            <person name="Wang Y."/>
            <person name="Tan G."/>
            <person name="Lai P.S."/>
            <person name="Piloquet H."/>
            <person name="Joubert M."/>
            <person name="Kayserili H."/>
            <person name="Kripps K.A."/>
            <person name="Nahas S.A."/>
            <person name="Wartchow E.P."/>
            <person name="Warren M."/>
            <person name="Bhavani G.S."/>
            <person name="Dasouki M."/>
            <person name="Sandoval R."/>
            <person name="Carvalho E."/>
            <person name="Ramos L."/>
            <person name="Porta G."/>
            <person name="Wu B."/>
            <person name="Lashkari H.P."/>
            <person name="Al-Saleem B."/>
            <person name="Ba-Abbad R.M."/>
            <person name="Abreu Ferrao A.N."/>
            <person name="Karageorgou V."/>
            <person name="Ordonez-Herrera N."/>
            <person name="Khan S."/>
            <person name="Bauer P."/>
            <person name="Cogne B."/>
            <person name="Bertoli-Avella A.M."/>
            <person name="Vincent M."/>
            <person name="Girisha K.M."/>
            <person name="Reversade B."/>
        </authorList>
    </citation>
    <scope>DISRUPTION PHENOTYPE</scope>
</reference>
<dbReference type="EMBL" id="CU914308">
    <property type="status" value="NOT_ANNOTATED_CDS"/>
    <property type="molecule type" value="Genomic_DNA"/>
</dbReference>
<dbReference type="EMBL" id="CU929552">
    <property type="status" value="NOT_ANNOTATED_CDS"/>
    <property type="molecule type" value="Genomic_DNA"/>
</dbReference>
<dbReference type="EMBL" id="CU972454">
    <property type="status" value="NOT_ANNOTATED_CDS"/>
    <property type="molecule type" value="Genomic_DNA"/>
</dbReference>
<dbReference type="EMBL" id="FO904823">
    <property type="status" value="NOT_ANNOTATED_CDS"/>
    <property type="molecule type" value="Genomic_DNA"/>
</dbReference>
<dbReference type="RefSeq" id="NP_001410767.1">
    <property type="nucleotide sequence ID" value="NM_001423838.1"/>
</dbReference>
<dbReference type="RefSeq" id="XP_009301365.1">
    <property type="nucleotide sequence ID" value="XM_009303090.2"/>
</dbReference>
<dbReference type="FunCoup" id="E7FGT5">
    <property type="interactions" value="921"/>
</dbReference>
<dbReference type="STRING" id="7955.ENSDARP00000028693"/>
<dbReference type="PaxDb" id="7955-ENSDARP00000028693"/>
<dbReference type="PeptideAtlas" id="E7FGT5"/>
<dbReference type="Ensembl" id="ENSDART00000037846">
    <property type="protein sequence ID" value="ENSDARP00000028693"/>
    <property type="gene ID" value="ENSDARG00000022020"/>
</dbReference>
<dbReference type="GeneID" id="100150998"/>
<dbReference type="eggNOG" id="ENOG502QQKG">
    <property type="taxonomic scope" value="Eukaryota"/>
</dbReference>
<dbReference type="HOGENOM" id="CLU_002970_0_0_1"/>
<dbReference type="InParanoid" id="E7FGT5"/>
<dbReference type="OMA" id="GQLFSWF"/>
<dbReference type="OrthoDB" id="6125419at2759"/>
<dbReference type="TreeFam" id="TF323261"/>
<dbReference type="PRO" id="PR:E7FGT5"/>
<dbReference type="Proteomes" id="UP000000437">
    <property type="component" value="Chromosome 7"/>
</dbReference>
<dbReference type="Bgee" id="ENSDARG00000022020">
    <property type="expression patterns" value="Expressed in presomitic mesoderm and 25 other cell types or tissues"/>
</dbReference>
<dbReference type="GO" id="GO:0005829">
    <property type="term" value="C:cytosol"/>
    <property type="evidence" value="ECO:0007669"/>
    <property type="project" value="UniProtKB-SubCell"/>
</dbReference>
<dbReference type="GO" id="GO:0005925">
    <property type="term" value="C:focal adhesion"/>
    <property type="evidence" value="ECO:0007669"/>
    <property type="project" value="UniProtKB-SubCell"/>
</dbReference>
<dbReference type="GO" id="GO:0060147">
    <property type="term" value="P:regulation of post-transcriptional gene silencing"/>
    <property type="evidence" value="ECO:0007669"/>
    <property type="project" value="InterPro"/>
</dbReference>
<dbReference type="InterPro" id="IPR016024">
    <property type="entry name" value="ARM-type_fold"/>
</dbReference>
<dbReference type="InterPro" id="IPR022542">
    <property type="entry name" value="FOCAD/RST1_DUF3730"/>
</dbReference>
<dbReference type="InterPro" id="IPR045163">
    <property type="entry name" value="Focadhesin/RST1"/>
</dbReference>
<dbReference type="InterPro" id="IPR021392">
    <property type="entry name" value="Focadhesin_C"/>
</dbReference>
<dbReference type="PANTHER" id="PTHR16212:SF4">
    <property type="entry name" value="FOCADHESIN"/>
    <property type="match status" value="1"/>
</dbReference>
<dbReference type="PANTHER" id="PTHR16212">
    <property type="entry name" value="FOCADHESIN FAMILY MEMBER"/>
    <property type="match status" value="1"/>
</dbReference>
<dbReference type="Pfam" id="PF12530">
    <property type="entry name" value="DUF3730"/>
    <property type="match status" value="1"/>
</dbReference>
<dbReference type="Pfam" id="PF11229">
    <property type="entry name" value="Focadhesin"/>
    <property type="match status" value="1"/>
</dbReference>
<dbReference type="SUPFAM" id="SSF48371">
    <property type="entry name" value="ARM repeat"/>
    <property type="match status" value="1"/>
</dbReference>
<evidence type="ECO:0000250" key="1">
    <source>
        <dbReference type="UniProtKB" id="Q5VW36"/>
    </source>
</evidence>
<evidence type="ECO:0000256" key="2">
    <source>
        <dbReference type="SAM" id="MobiDB-lite"/>
    </source>
</evidence>
<evidence type="ECO:0000269" key="3">
    <source>
    </source>
</evidence>
<organism>
    <name type="scientific">Danio rerio</name>
    <name type="common">Zebrafish</name>
    <name type="synonym">Brachydanio rerio</name>
    <dbReference type="NCBI Taxonomy" id="7955"/>
    <lineage>
        <taxon>Eukaryota</taxon>
        <taxon>Metazoa</taxon>
        <taxon>Chordata</taxon>
        <taxon>Craniata</taxon>
        <taxon>Vertebrata</taxon>
        <taxon>Euteleostomi</taxon>
        <taxon>Actinopterygii</taxon>
        <taxon>Neopterygii</taxon>
        <taxon>Teleostei</taxon>
        <taxon>Ostariophysi</taxon>
        <taxon>Cypriniformes</taxon>
        <taxon>Danionidae</taxon>
        <taxon>Danioninae</taxon>
        <taxon>Danio</taxon>
    </lineage>
</organism>
<feature type="chain" id="PRO_0000457564" description="Focadhesin">
    <location>
        <begin position="1"/>
        <end position="1806"/>
    </location>
</feature>
<feature type="region of interest" description="Disordered" evidence="2">
    <location>
        <begin position="733"/>
        <end position="760"/>
    </location>
</feature>